<accession>Q7M8N9</accession>
<sequence>MKKIEIELNERSYPIHLGTMECLEHAGAVLVVTNPKVGGLYLSYVLERIRAREVFVCTTPDGEAYKTLESVEMILESAFNHRLDRKSLMIALGGGVIGDMVGFASGIFQRGIGFVQIPTTLLSQVDASVGGKTGVNNAFGKNLIGLFHQPKAVYIDPLFLKSLPPREFGAGVAEMVKMAVTFDREFFEELERGDLRDHSFLLKGIERCVKIKARVVAMDEREQGIRAALNYGHTFGHVIEHESGYGHYLHGEAVGMGMVMANTLACGLGLLKESEAERIEKLLARYEIPTRYAIGDVERFYDLFFLDKKSENQKIKFILPEGIGGVAFRDDLSKSMVLSVLEAFCD</sequence>
<comment type="function">
    <text evidence="1">Catalyzes the conversion of 3-deoxy-D-arabino-heptulosonate 7-phosphate (DAHP) to dehydroquinate (DHQ).</text>
</comment>
<comment type="catalytic activity">
    <reaction evidence="1">
        <text>7-phospho-2-dehydro-3-deoxy-D-arabino-heptonate = 3-dehydroquinate + phosphate</text>
        <dbReference type="Rhea" id="RHEA:21968"/>
        <dbReference type="ChEBI" id="CHEBI:32364"/>
        <dbReference type="ChEBI" id="CHEBI:43474"/>
        <dbReference type="ChEBI" id="CHEBI:58394"/>
        <dbReference type="EC" id="4.2.3.4"/>
    </reaction>
</comment>
<comment type="cofactor">
    <cofactor evidence="1">
        <name>NAD(+)</name>
        <dbReference type="ChEBI" id="CHEBI:57540"/>
    </cofactor>
</comment>
<comment type="cofactor">
    <cofactor evidence="1">
        <name>Co(2+)</name>
        <dbReference type="ChEBI" id="CHEBI:48828"/>
    </cofactor>
    <cofactor evidence="1">
        <name>Zn(2+)</name>
        <dbReference type="ChEBI" id="CHEBI:29105"/>
    </cofactor>
    <text evidence="1">Binds 1 divalent metal cation per subunit. Can use either Co(2+) or Zn(2+).</text>
</comment>
<comment type="pathway">
    <text evidence="1">Metabolic intermediate biosynthesis; chorismate biosynthesis; chorismate from D-erythrose 4-phosphate and phosphoenolpyruvate: step 2/7.</text>
</comment>
<comment type="subcellular location">
    <subcellularLocation>
        <location evidence="1">Cytoplasm</location>
    </subcellularLocation>
</comment>
<comment type="similarity">
    <text evidence="1">Belongs to the sugar phosphate cyclases superfamily. Dehydroquinate synthase family.</text>
</comment>
<name>AROB_WOLSU</name>
<evidence type="ECO:0000255" key="1">
    <source>
        <dbReference type="HAMAP-Rule" id="MF_00110"/>
    </source>
</evidence>
<dbReference type="EC" id="4.2.3.4" evidence="1"/>
<dbReference type="EMBL" id="BX571661">
    <property type="protein sequence ID" value="CAE10565.1"/>
    <property type="molecule type" value="Genomic_DNA"/>
</dbReference>
<dbReference type="RefSeq" id="WP_011139349.1">
    <property type="nucleotide sequence ID" value="NC_005090.1"/>
</dbReference>
<dbReference type="SMR" id="Q7M8N9"/>
<dbReference type="STRING" id="273121.WS1517"/>
<dbReference type="KEGG" id="wsu:WS1517"/>
<dbReference type="eggNOG" id="COG0337">
    <property type="taxonomic scope" value="Bacteria"/>
</dbReference>
<dbReference type="HOGENOM" id="CLU_001201_0_1_7"/>
<dbReference type="UniPathway" id="UPA00053">
    <property type="reaction ID" value="UER00085"/>
</dbReference>
<dbReference type="Proteomes" id="UP000000422">
    <property type="component" value="Chromosome"/>
</dbReference>
<dbReference type="GO" id="GO:0005737">
    <property type="term" value="C:cytoplasm"/>
    <property type="evidence" value="ECO:0007669"/>
    <property type="project" value="UniProtKB-SubCell"/>
</dbReference>
<dbReference type="GO" id="GO:0003856">
    <property type="term" value="F:3-dehydroquinate synthase activity"/>
    <property type="evidence" value="ECO:0007669"/>
    <property type="project" value="UniProtKB-UniRule"/>
</dbReference>
<dbReference type="GO" id="GO:0046872">
    <property type="term" value="F:metal ion binding"/>
    <property type="evidence" value="ECO:0007669"/>
    <property type="project" value="UniProtKB-KW"/>
</dbReference>
<dbReference type="GO" id="GO:0000166">
    <property type="term" value="F:nucleotide binding"/>
    <property type="evidence" value="ECO:0007669"/>
    <property type="project" value="UniProtKB-KW"/>
</dbReference>
<dbReference type="GO" id="GO:0008652">
    <property type="term" value="P:amino acid biosynthetic process"/>
    <property type="evidence" value="ECO:0007669"/>
    <property type="project" value="UniProtKB-KW"/>
</dbReference>
<dbReference type="GO" id="GO:0009073">
    <property type="term" value="P:aromatic amino acid family biosynthetic process"/>
    <property type="evidence" value="ECO:0007669"/>
    <property type="project" value="UniProtKB-KW"/>
</dbReference>
<dbReference type="GO" id="GO:0009423">
    <property type="term" value="P:chorismate biosynthetic process"/>
    <property type="evidence" value="ECO:0007669"/>
    <property type="project" value="UniProtKB-UniRule"/>
</dbReference>
<dbReference type="CDD" id="cd08195">
    <property type="entry name" value="DHQS"/>
    <property type="match status" value="1"/>
</dbReference>
<dbReference type="FunFam" id="3.40.50.1970:FF:000007">
    <property type="entry name" value="Pentafunctional AROM polypeptide"/>
    <property type="match status" value="1"/>
</dbReference>
<dbReference type="Gene3D" id="3.40.50.1970">
    <property type="match status" value="1"/>
</dbReference>
<dbReference type="Gene3D" id="1.20.1090.10">
    <property type="entry name" value="Dehydroquinate synthase-like - alpha domain"/>
    <property type="match status" value="1"/>
</dbReference>
<dbReference type="HAMAP" id="MF_00110">
    <property type="entry name" value="DHQ_synthase"/>
    <property type="match status" value="1"/>
</dbReference>
<dbReference type="InterPro" id="IPR050071">
    <property type="entry name" value="Dehydroquinate_synthase"/>
</dbReference>
<dbReference type="InterPro" id="IPR016037">
    <property type="entry name" value="DHQ_synth_AroB"/>
</dbReference>
<dbReference type="InterPro" id="IPR030963">
    <property type="entry name" value="DHQ_synth_fam"/>
</dbReference>
<dbReference type="InterPro" id="IPR030960">
    <property type="entry name" value="DHQS/DOIS_N"/>
</dbReference>
<dbReference type="InterPro" id="IPR056179">
    <property type="entry name" value="DHQS_C"/>
</dbReference>
<dbReference type="NCBIfam" id="TIGR01357">
    <property type="entry name" value="aroB"/>
    <property type="match status" value="1"/>
</dbReference>
<dbReference type="PANTHER" id="PTHR43622">
    <property type="entry name" value="3-DEHYDROQUINATE SYNTHASE"/>
    <property type="match status" value="1"/>
</dbReference>
<dbReference type="PANTHER" id="PTHR43622:SF7">
    <property type="entry name" value="3-DEHYDROQUINATE SYNTHASE, CHLOROPLASTIC"/>
    <property type="match status" value="1"/>
</dbReference>
<dbReference type="Pfam" id="PF01761">
    <property type="entry name" value="DHQ_synthase"/>
    <property type="match status" value="1"/>
</dbReference>
<dbReference type="Pfam" id="PF24621">
    <property type="entry name" value="DHQS_C"/>
    <property type="match status" value="1"/>
</dbReference>
<dbReference type="PIRSF" id="PIRSF001455">
    <property type="entry name" value="DHQ_synth"/>
    <property type="match status" value="1"/>
</dbReference>
<dbReference type="SUPFAM" id="SSF56796">
    <property type="entry name" value="Dehydroquinate synthase-like"/>
    <property type="match status" value="1"/>
</dbReference>
<protein>
    <recommendedName>
        <fullName evidence="1">3-dehydroquinate synthase</fullName>
        <shortName evidence="1">DHQS</shortName>
        <ecNumber evidence="1">4.2.3.4</ecNumber>
    </recommendedName>
</protein>
<proteinExistence type="inferred from homology"/>
<organism>
    <name type="scientific">Wolinella succinogenes (strain ATCC 29543 / DSM 1740 / CCUG 13145 / JCM 31913 / LMG 7466 / NCTC 11488 / FDC 602W)</name>
    <name type="common">Vibrio succinogenes</name>
    <dbReference type="NCBI Taxonomy" id="273121"/>
    <lineage>
        <taxon>Bacteria</taxon>
        <taxon>Pseudomonadati</taxon>
        <taxon>Campylobacterota</taxon>
        <taxon>Epsilonproteobacteria</taxon>
        <taxon>Campylobacterales</taxon>
        <taxon>Helicobacteraceae</taxon>
        <taxon>Wolinella</taxon>
    </lineage>
</organism>
<keyword id="KW-0028">Amino-acid biosynthesis</keyword>
<keyword id="KW-0057">Aromatic amino acid biosynthesis</keyword>
<keyword id="KW-0170">Cobalt</keyword>
<keyword id="KW-0963">Cytoplasm</keyword>
<keyword id="KW-0456">Lyase</keyword>
<keyword id="KW-0479">Metal-binding</keyword>
<keyword id="KW-0520">NAD</keyword>
<keyword id="KW-0547">Nucleotide-binding</keyword>
<keyword id="KW-1185">Reference proteome</keyword>
<keyword id="KW-0862">Zinc</keyword>
<feature type="chain" id="PRO_0000140808" description="3-dehydroquinate synthase">
    <location>
        <begin position="1"/>
        <end position="346"/>
    </location>
</feature>
<feature type="binding site" evidence="1">
    <location>
        <begin position="61"/>
        <end position="66"/>
    </location>
    <ligand>
        <name>NAD(+)</name>
        <dbReference type="ChEBI" id="CHEBI:57540"/>
    </ligand>
</feature>
<feature type="binding site" evidence="1">
    <location>
        <begin position="95"/>
        <end position="99"/>
    </location>
    <ligand>
        <name>NAD(+)</name>
        <dbReference type="ChEBI" id="CHEBI:57540"/>
    </ligand>
</feature>
<feature type="binding site" evidence="1">
    <location>
        <begin position="119"/>
        <end position="120"/>
    </location>
    <ligand>
        <name>NAD(+)</name>
        <dbReference type="ChEBI" id="CHEBI:57540"/>
    </ligand>
</feature>
<feature type="binding site" evidence="1">
    <location>
        <position position="132"/>
    </location>
    <ligand>
        <name>NAD(+)</name>
        <dbReference type="ChEBI" id="CHEBI:57540"/>
    </ligand>
</feature>
<feature type="binding site" evidence="1">
    <location>
        <position position="141"/>
    </location>
    <ligand>
        <name>NAD(+)</name>
        <dbReference type="ChEBI" id="CHEBI:57540"/>
    </ligand>
</feature>
<feature type="binding site" evidence="1">
    <location>
        <position position="174"/>
    </location>
    <ligand>
        <name>Zn(2+)</name>
        <dbReference type="ChEBI" id="CHEBI:29105"/>
    </ligand>
</feature>
<feature type="binding site" evidence="1">
    <location>
        <position position="233"/>
    </location>
    <ligand>
        <name>Zn(2+)</name>
        <dbReference type="ChEBI" id="CHEBI:29105"/>
    </ligand>
</feature>
<feature type="binding site" evidence="1">
    <location>
        <position position="250"/>
    </location>
    <ligand>
        <name>Zn(2+)</name>
        <dbReference type="ChEBI" id="CHEBI:29105"/>
    </ligand>
</feature>
<reference key="1">
    <citation type="journal article" date="2003" name="Proc. Natl. Acad. Sci. U.S.A.">
        <title>Complete genome sequence and analysis of Wolinella succinogenes.</title>
        <authorList>
            <person name="Baar C."/>
            <person name="Eppinger M."/>
            <person name="Raddatz G."/>
            <person name="Simon J."/>
            <person name="Lanz C."/>
            <person name="Klimmek O."/>
            <person name="Nandakumar R."/>
            <person name="Gross R."/>
            <person name="Rosinus A."/>
            <person name="Keller H."/>
            <person name="Jagtap P."/>
            <person name="Linke B."/>
            <person name="Meyer F."/>
            <person name="Lederer H."/>
            <person name="Schuster S.C."/>
        </authorList>
    </citation>
    <scope>NUCLEOTIDE SEQUENCE [LARGE SCALE GENOMIC DNA]</scope>
    <source>
        <strain>ATCC 29543 / DSM 1740 / CCUG 13145 / JCM 31913 / LMG 7466 / NCTC 11488 / FDC 602W</strain>
    </source>
</reference>
<gene>
    <name evidence="1" type="primary">aroB</name>
    <name type="ordered locus">WS1517</name>
</gene>